<dbReference type="EC" id="1.3.1.87"/>
<dbReference type="EMBL" id="U00096">
    <property type="protein sequence ID" value="AAC75594.1"/>
    <property type="molecule type" value="Genomic_DNA"/>
</dbReference>
<dbReference type="EMBL" id="AP009048">
    <property type="protein sequence ID" value="BAA16444.1"/>
    <property type="molecule type" value="Genomic_DNA"/>
</dbReference>
<dbReference type="PIR" id="D65031">
    <property type="entry name" value="D65031"/>
</dbReference>
<dbReference type="RefSeq" id="NP_417036.1">
    <property type="nucleotide sequence ID" value="NC_000913.3"/>
</dbReference>
<dbReference type="RefSeq" id="WP_001281379.1">
    <property type="nucleotide sequence ID" value="NZ_LN832404.1"/>
</dbReference>
<dbReference type="SMR" id="P0CI31"/>
<dbReference type="BioGRID" id="4260604">
    <property type="interactions" value="14"/>
</dbReference>
<dbReference type="DIP" id="DIP-9863N"/>
<dbReference type="FunCoup" id="P0CI31">
    <property type="interactions" value="70"/>
</dbReference>
<dbReference type="IntAct" id="P0CI31">
    <property type="interactions" value="7"/>
</dbReference>
<dbReference type="STRING" id="511145.b2541"/>
<dbReference type="PaxDb" id="511145-b2541"/>
<dbReference type="EnsemblBacteria" id="AAC75594">
    <property type="protein sequence ID" value="AAC75594"/>
    <property type="gene ID" value="b2541"/>
</dbReference>
<dbReference type="GeneID" id="945346"/>
<dbReference type="KEGG" id="ecj:JW2525"/>
<dbReference type="KEGG" id="eco:b2541"/>
<dbReference type="KEGG" id="ecoc:C3026_14075"/>
<dbReference type="PATRIC" id="fig|1411691.4.peg.4193"/>
<dbReference type="EchoBASE" id="EB3232"/>
<dbReference type="eggNOG" id="COG1028">
    <property type="taxonomic scope" value="Bacteria"/>
</dbReference>
<dbReference type="HOGENOM" id="CLU_010194_1_0_6"/>
<dbReference type="InParanoid" id="P0CI31"/>
<dbReference type="OMA" id="VFHINVK"/>
<dbReference type="OrthoDB" id="9803333at2"/>
<dbReference type="PhylomeDB" id="P0CI31"/>
<dbReference type="BioCyc" id="EcoCyc:PHENPRODIOLDEHYDROG-MONOMER"/>
<dbReference type="BioCyc" id="MetaCyc:PHENPRODIOLDEHYDROG-MONOMER"/>
<dbReference type="UniPathway" id="UPA00714"/>
<dbReference type="PRO" id="PR:P0CI31"/>
<dbReference type="Proteomes" id="UP000000625">
    <property type="component" value="Chromosome"/>
</dbReference>
<dbReference type="GO" id="GO:0018498">
    <property type="term" value="F:2,3-dihydroxy-2,3-dihydro-phenylpropionate dehydrogenase activity"/>
    <property type="evidence" value="ECO:0007669"/>
    <property type="project" value="UniProtKB-UniRule"/>
</dbReference>
<dbReference type="GO" id="GO:0019380">
    <property type="term" value="P:3-phenylpropionate catabolic process"/>
    <property type="evidence" value="ECO:0000315"/>
    <property type="project" value="EcoCyc"/>
</dbReference>
<dbReference type="CDD" id="cd05348">
    <property type="entry name" value="BphB-like_SDR_c"/>
    <property type="match status" value="1"/>
</dbReference>
<dbReference type="FunFam" id="3.40.50.720:FF:000151">
    <property type="entry name" value="3-phenylpropionate-dihydrodiol/cinnamic acid-dihydrodiol dehydrogenase"/>
    <property type="match status" value="1"/>
</dbReference>
<dbReference type="Gene3D" id="3.40.50.720">
    <property type="entry name" value="NAD(P)-binding Rossmann-like Domain"/>
    <property type="match status" value="1"/>
</dbReference>
<dbReference type="HAMAP" id="MF_01647">
    <property type="entry name" value="HcaB"/>
    <property type="match status" value="1"/>
</dbReference>
<dbReference type="InterPro" id="IPR047950">
    <property type="entry name" value="BphB-like_SDR"/>
</dbReference>
<dbReference type="InterPro" id="IPR023643">
    <property type="entry name" value="Dihydrodiol_DH_HcaB"/>
</dbReference>
<dbReference type="InterPro" id="IPR036291">
    <property type="entry name" value="NAD(P)-bd_dom_sf"/>
</dbReference>
<dbReference type="InterPro" id="IPR020904">
    <property type="entry name" value="Sc_DH/Rdtase_CS"/>
</dbReference>
<dbReference type="InterPro" id="IPR002347">
    <property type="entry name" value="SDR_fam"/>
</dbReference>
<dbReference type="NCBIfam" id="NF042950">
    <property type="entry name" value="3PPDhyd_Dh_HcaB"/>
    <property type="match status" value="1"/>
</dbReference>
<dbReference type="NCBIfam" id="NF004849">
    <property type="entry name" value="PRK06200.1"/>
    <property type="match status" value="1"/>
</dbReference>
<dbReference type="PANTHER" id="PTHR43943:SF17">
    <property type="entry name" value="3-PHENYLPROPIONATE-DIHYDRODIOL_CINNAMIC ACID-DIHYDRODIOL DEHYDROGENASE"/>
    <property type="match status" value="1"/>
</dbReference>
<dbReference type="PANTHER" id="PTHR43943">
    <property type="entry name" value="DEHYDROGENASE/REDUCTASE (SDR FAMILY) MEMBER 4"/>
    <property type="match status" value="1"/>
</dbReference>
<dbReference type="Pfam" id="PF00106">
    <property type="entry name" value="adh_short"/>
    <property type="match status" value="1"/>
</dbReference>
<dbReference type="PRINTS" id="PR00081">
    <property type="entry name" value="GDHRDH"/>
</dbReference>
<dbReference type="PRINTS" id="PR00080">
    <property type="entry name" value="SDRFAMILY"/>
</dbReference>
<dbReference type="SUPFAM" id="SSF51735">
    <property type="entry name" value="NAD(P)-binding Rossmann-fold domains"/>
    <property type="match status" value="1"/>
</dbReference>
<dbReference type="PROSITE" id="PS00061">
    <property type="entry name" value="ADH_SHORT"/>
    <property type="match status" value="1"/>
</dbReference>
<evidence type="ECO:0000250" key="1"/>
<evidence type="ECO:0000269" key="2">
    <source>
    </source>
</evidence>
<evidence type="ECO:0000305" key="3"/>
<comment type="function">
    <text evidence="1 2">Converts 3-phenylpropionate-dihydrodiol (PP-dihydrodiol) and cinnamic acid-dihydrodiol (CI-dihydrodiol) into 3-(2,3-dihydroxylphenyl)propanoic acid (DHPP) and 2,3-dihydroxicinnamic acid (DHCI), respectively.</text>
</comment>
<comment type="catalytic activity">
    <reaction evidence="2">
        <text>3-(cis-5,6-dihydroxycyclohexa-1,3-dien-1-yl)propanoate + NAD(+) = 3-(2,3-dihydroxyphenyl)propanoate + NADH + H(+)</text>
        <dbReference type="Rhea" id="RHEA:25062"/>
        <dbReference type="ChEBI" id="CHEBI:15378"/>
        <dbReference type="ChEBI" id="CHEBI:46951"/>
        <dbReference type="ChEBI" id="CHEBI:57540"/>
        <dbReference type="ChEBI" id="CHEBI:57945"/>
        <dbReference type="ChEBI" id="CHEBI:60087"/>
        <dbReference type="EC" id="1.3.1.87"/>
    </reaction>
</comment>
<comment type="catalytic activity">
    <reaction evidence="2">
        <text>(2E)-3-(cis-5,6-dihydroxycyclohexa-1,3-dien-1-yl)prop-2-enoate + NAD(+) = (2E)-3-(2,3-dihydroxyphenyl)prop-2-enoate + NADH + H(+)</text>
        <dbReference type="Rhea" id="RHEA:25066"/>
        <dbReference type="ChEBI" id="CHEBI:15378"/>
        <dbReference type="ChEBI" id="CHEBI:57540"/>
        <dbReference type="ChEBI" id="CHEBI:57945"/>
        <dbReference type="ChEBI" id="CHEBI:58642"/>
        <dbReference type="ChEBI" id="CHEBI:61451"/>
        <dbReference type="EC" id="1.3.1.87"/>
    </reaction>
</comment>
<comment type="pathway">
    <text>Aromatic compound metabolism; 3-phenylpropanoate degradation.</text>
</comment>
<comment type="similarity">
    <text evidence="3">Belongs to the short-chain dehydrogenases/reductases (SDR) family.</text>
</comment>
<sequence>MSDLHNESIFITGGGSGLGLALVERFIEEGAQVATLELSAAKVASLRQRFGEHILAVEGNVTCYADYQRAVDQILTRSGKLDCFIGNAGIWDHNASLVNTPAETLETGFHELFNVNVLGYLLGAKACAPALIASEGSMIFTLSNAAWYPGGGGPLYTASKHAATGLIRQLAYELAPKVRVNGVGPCGMASDLRGPQALGQSETSIMQSLTPEKIAAILPLQFFPQPADFTGPYVMLTSRRNNRALSGVMINADAGLAIRGIRHVAAGLDL</sequence>
<reference key="1">
    <citation type="journal article" date="1997" name="DNA Res.">
        <title>Construction of a contiguous 874-kb sequence of the Escherichia coli-K12 genome corresponding to 50.0-68.8 min on the linkage map and analysis of its sequence features.</title>
        <authorList>
            <person name="Yamamoto Y."/>
            <person name="Aiba H."/>
            <person name="Baba T."/>
            <person name="Hayashi K."/>
            <person name="Inada T."/>
            <person name="Isono K."/>
            <person name="Itoh T."/>
            <person name="Kimura S."/>
            <person name="Kitagawa M."/>
            <person name="Makino K."/>
            <person name="Miki T."/>
            <person name="Mitsuhashi N."/>
            <person name="Mizobuchi K."/>
            <person name="Mori H."/>
            <person name="Nakade S."/>
            <person name="Nakamura Y."/>
            <person name="Nashimoto H."/>
            <person name="Oshima T."/>
            <person name="Oyama S."/>
            <person name="Saito N."/>
            <person name="Sampei G."/>
            <person name="Satoh Y."/>
            <person name="Sivasundaram S."/>
            <person name="Tagami H."/>
            <person name="Takahashi H."/>
            <person name="Takeda J."/>
            <person name="Takemoto K."/>
            <person name="Uehara K."/>
            <person name="Wada C."/>
            <person name="Yamagata S."/>
            <person name="Horiuchi T."/>
        </authorList>
    </citation>
    <scope>NUCLEOTIDE SEQUENCE [LARGE SCALE GENOMIC DNA]</scope>
    <source>
        <strain>K12 / W3110 / ATCC 27325 / DSM 5911</strain>
    </source>
</reference>
<reference key="2">
    <citation type="journal article" date="1997" name="Science">
        <title>The complete genome sequence of Escherichia coli K-12.</title>
        <authorList>
            <person name="Blattner F.R."/>
            <person name="Plunkett G. III"/>
            <person name="Bloch C.A."/>
            <person name="Perna N.T."/>
            <person name="Burland V."/>
            <person name="Riley M."/>
            <person name="Collado-Vides J."/>
            <person name="Glasner J.D."/>
            <person name="Rode C.K."/>
            <person name="Mayhew G.F."/>
            <person name="Gregor J."/>
            <person name="Davis N.W."/>
            <person name="Kirkpatrick H.A."/>
            <person name="Goeden M.A."/>
            <person name="Rose D.J."/>
            <person name="Mau B."/>
            <person name="Shao Y."/>
        </authorList>
    </citation>
    <scope>NUCLEOTIDE SEQUENCE [LARGE SCALE GENOMIC DNA]</scope>
    <source>
        <strain>K12 / MG1655 / ATCC 47076</strain>
    </source>
</reference>
<reference key="3">
    <citation type="journal article" date="2006" name="Mol. Syst. Biol.">
        <title>Highly accurate genome sequences of Escherichia coli K-12 strains MG1655 and W3110.</title>
        <authorList>
            <person name="Hayashi K."/>
            <person name="Morooka N."/>
            <person name="Yamamoto Y."/>
            <person name="Fujita K."/>
            <person name="Isono K."/>
            <person name="Choi S."/>
            <person name="Ohtsubo E."/>
            <person name="Baba T."/>
            <person name="Wanner B.L."/>
            <person name="Mori H."/>
            <person name="Horiuchi T."/>
        </authorList>
    </citation>
    <scope>NUCLEOTIDE SEQUENCE [LARGE SCALE GENOMIC DNA]</scope>
    <source>
        <strain>K12 / W3110 / ATCC 27325 / DSM 5911</strain>
    </source>
</reference>
<reference key="4">
    <citation type="journal article" date="1998" name="J. Bacteriol.">
        <title>Characterization of the hca cluster encoding the dioxygenolytic pathway for initial catabolism of 3-phenylpropionic acid in Escherichia coli K-12.</title>
        <authorList>
            <person name="Diaz E."/>
            <person name="Ferrandez A."/>
            <person name="Garcia J.L."/>
        </authorList>
    </citation>
    <scope>FUNCTION IN CATABOLISM OF PHENYLPROPIONIC AND CINNAMIC ACIDS</scope>
    <scope>CATALYTIC ACTIVITY</scope>
    <source>
        <strain>K12 / MC1061 / ATCC 53338 / DSM 7140</strain>
    </source>
</reference>
<keyword id="KW-0058">Aromatic hydrocarbons catabolism</keyword>
<keyword id="KW-0520">NAD</keyword>
<keyword id="KW-0560">Oxidoreductase</keyword>
<keyword id="KW-1185">Reference proteome</keyword>
<protein>
    <recommendedName>
        <fullName>3-phenylpropionate-dihydrodiol/cinnamic acid-dihydrodiol dehydrogenase</fullName>
        <ecNumber>1.3.1.87</ecNumber>
    </recommendedName>
    <alternativeName>
        <fullName>2,3-dihydroxy-2,3-dihydrophenylpropionate dehydrogenase</fullName>
    </alternativeName>
    <alternativeName>
        <fullName>3-(cis-5,6-dihydroxycyclohexa-1,3-dien-1-yl)propanoate dehydrogenase</fullName>
    </alternativeName>
    <alternativeName>
        <fullName>CI-dihydrodiol dehydrogenase</fullName>
    </alternativeName>
    <alternativeName>
        <fullName>Cis-3-(2-carboxyethenyl)-3,5-cyclohexadiene-1,2-diol dehydrogenase</fullName>
    </alternativeName>
    <alternativeName>
        <fullName>Cis-3-(2-carboxyethyl)-3,5-cyclohexadiene-1,2-diol dehydrogenase</fullName>
    </alternativeName>
    <alternativeName>
        <fullName>PP-dihydrodiol dehydrogenase</fullName>
    </alternativeName>
</protein>
<proteinExistence type="inferred from homology"/>
<organism>
    <name type="scientific">Escherichia coli (strain K12)</name>
    <dbReference type="NCBI Taxonomy" id="83333"/>
    <lineage>
        <taxon>Bacteria</taxon>
        <taxon>Pseudomonadati</taxon>
        <taxon>Pseudomonadota</taxon>
        <taxon>Gammaproteobacteria</taxon>
        <taxon>Enterobacterales</taxon>
        <taxon>Enterobacteriaceae</taxon>
        <taxon>Escherichia</taxon>
    </lineage>
</organism>
<name>HCAB_ECOLI</name>
<gene>
    <name type="primary">hcaB</name>
    <name type="synonym">phdD</name>
    <name type="synonym">yfhX</name>
    <name type="ordered locus">b2541</name>
    <name type="ordered locus">JW2525</name>
</gene>
<accession>P0CI31</accession>
<accession>P76995</accession>
<accession>P77646</accession>
<feature type="chain" id="PRO_0000054704" description="3-phenylpropionate-dihydrodiol/cinnamic acid-dihydrodiol dehydrogenase">
    <location>
        <begin position="1"/>
        <end position="270"/>
    </location>
</feature>
<feature type="active site" description="Proton acceptor" evidence="1">
    <location>
        <position position="156"/>
    </location>
</feature>
<feature type="binding site" evidence="1">
    <location>
        <begin position="10"/>
        <end position="34"/>
    </location>
    <ligand>
        <name>NAD(+)</name>
        <dbReference type="ChEBI" id="CHEBI:57540"/>
    </ligand>
</feature>
<feature type="binding site" evidence="1">
    <location>
        <position position="143"/>
    </location>
    <ligand>
        <name>substrate</name>
    </ligand>
</feature>